<organism>
    <name type="scientific">Albidiferax ferrireducens (strain ATCC BAA-621 / DSM 15236 / T118)</name>
    <name type="common">Rhodoferax ferrireducens</name>
    <dbReference type="NCBI Taxonomy" id="338969"/>
    <lineage>
        <taxon>Bacteria</taxon>
        <taxon>Pseudomonadati</taxon>
        <taxon>Pseudomonadota</taxon>
        <taxon>Betaproteobacteria</taxon>
        <taxon>Burkholderiales</taxon>
        <taxon>Comamonadaceae</taxon>
        <taxon>Rhodoferax</taxon>
    </lineage>
</organism>
<gene>
    <name evidence="1" type="primary">recR</name>
    <name type="ordered locus">Rfer_1459</name>
</gene>
<comment type="function">
    <text evidence="1">May play a role in DNA repair. It seems to be involved in an RecBC-independent recombinational process of DNA repair. It may act with RecF and RecO.</text>
</comment>
<comment type="similarity">
    <text evidence="1">Belongs to the RecR family.</text>
</comment>
<keyword id="KW-0227">DNA damage</keyword>
<keyword id="KW-0233">DNA recombination</keyword>
<keyword id="KW-0234">DNA repair</keyword>
<keyword id="KW-0479">Metal-binding</keyword>
<keyword id="KW-1185">Reference proteome</keyword>
<keyword id="KW-0862">Zinc</keyword>
<keyword id="KW-0863">Zinc-finger</keyword>
<evidence type="ECO:0000255" key="1">
    <source>
        <dbReference type="HAMAP-Rule" id="MF_00017"/>
    </source>
</evidence>
<accession>Q21YG1</accession>
<feature type="chain" id="PRO_0000322941" description="Recombination protein RecR">
    <location>
        <begin position="1"/>
        <end position="196"/>
    </location>
</feature>
<feature type="domain" description="Toprim" evidence="1">
    <location>
        <begin position="80"/>
        <end position="175"/>
    </location>
</feature>
<feature type="zinc finger region" description="C4-type" evidence="1">
    <location>
        <begin position="57"/>
        <end position="72"/>
    </location>
</feature>
<proteinExistence type="inferred from homology"/>
<dbReference type="EMBL" id="CP000267">
    <property type="protein sequence ID" value="ABD69192.1"/>
    <property type="molecule type" value="Genomic_DNA"/>
</dbReference>
<dbReference type="RefSeq" id="WP_011463760.1">
    <property type="nucleotide sequence ID" value="NC_007908.1"/>
</dbReference>
<dbReference type="SMR" id="Q21YG1"/>
<dbReference type="STRING" id="338969.Rfer_1459"/>
<dbReference type="KEGG" id="rfr:Rfer_1459"/>
<dbReference type="eggNOG" id="COG0353">
    <property type="taxonomic scope" value="Bacteria"/>
</dbReference>
<dbReference type="HOGENOM" id="CLU_060739_1_2_4"/>
<dbReference type="OrthoDB" id="9802672at2"/>
<dbReference type="Proteomes" id="UP000008332">
    <property type="component" value="Chromosome"/>
</dbReference>
<dbReference type="GO" id="GO:0003677">
    <property type="term" value="F:DNA binding"/>
    <property type="evidence" value="ECO:0007669"/>
    <property type="project" value="UniProtKB-UniRule"/>
</dbReference>
<dbReference type="GO" id="GO:0008270">
    <property type="term" value="F:zinc ion binding"/>
    <property type="evidence" value="ECO:0007669"/>
    <property type="project" value="UniProtKB-KW"/>
</dbReference>
<dbReference type="GO" id="GO:0006310">
    <property type="term" value="P:DNA recombination"/>
    <property type="evidence" value="ECO:0007669"/>
    <property type="project" value="UniProtKB-UniRule"/>
</dbReference>
<dbReference type="GO" id="GO:0006281">
    <property type="term" value="P:DNA repair"/>
    <property type="evidence" value="ECO:0007669"/>
    <property type="project" value="UniProtKB-UniRule"/>
</dbReference>
<dbReference type="CDD" id="cd01025">
    <property type="entry name" value="TOPRIM_recR"/>
    <property type="match status" value="1"/>
</dbReference>
<dbReference type="Gene3D" id="3.40.1360.10">
    <property type="match status" value="1"/>
</dbReference>
<dbReference type="Gene3D" id="6.10.250.240">
    <property type="match status" value="1"/>
</dbReference>
<dbReference type="Gene3D" id="1.10.8.420">
    <property type="entry name" value="RecR Domain 1"/>
    <property type="match status" value="1"/>
</dbReference>
<dbReference type="HAMAP" id="MF_00017">
    <property type="entry name" value="RecR"/>
    <property type="match status" value="1"/>
</dbReference>
<dbReference type="InterPro" id="IPR000093">
    <property type="entry name" value="DNA_Rcmb_RecR"/>
</dbReference>
<dbReference type="InterPro" id="IPR023627">
    <property type="entry name" value="Rcmb_RecR"/>
</dbReference>
<dbReference type="InterPro" id="IPR015967">
    <property type="entry name" value="Rcmb_RecR_Znf"/>
</dbReference>
<dbReference type="InterPro" id="IPR006171">
    <property type="entry name" value="TOPRIM_dom"/>
</dbReference>
<dbReference type="InterPro" id="IPR034137">
    <property type="entry name" value="TOPRIM_RecR"/>
</dbReference>
<dbReference type="NCBIfam" id="TIGR00615">
    <property type="entry name" value="recR"/>
    <property type="match status" value="1"/>
</dbReference>
<dbReference type="PANTHER" id="PTHR30446">
    <property type="entry name" value="RECOMBINATION PROTEIN RECR"/>
    <property type="match status" value="1"/>
</dbReference>
<dbReference type="PANTHER" id="PTHR30446:SF0">
    <property type="entry name" value="RECOMBINATION PROTEIN RECR"/>
    <property type="match status" value="1"/>
</dbReference>
<dbReference type="Pfam" id="PF21175">
    <property type="entry name" value="RecR_C"/>
    <property type="match status" value="1"/>
</dbReference>
<dbReference type="Pfam" id="PF21176">
    <property type="entry name" value="RecR_HhH"/>
    <property type="match status" value="1"/>
</dbReference>
<dbReference type="Pfam" id="PF02132">
    <property type="entry name" value="RecR_ZnF"/>
    <property type="match status" value="1"/>
</dbReference>
<dbReference type="Pfam" id="PF13662">
    <property type="entry name" value="Toprim_4"/>
    <property type="match status" value="1"/>
</dbReference>
<dbReference type="SMART" id="SM00493">
    <property type="entry name" value="TOPRIM"/>
    <property type="match status" value="1"/>
</dbReference>
<dbReference type="SUPFAM" id="SSF111304">
    <property type="entry name" value="Recombination protein RecR"/>
    <property type="match status" value="1"/>
</dbReference>
<dbReference type="PROSITE" id="PS50880">
    <property type="entry name" value="TOPRIM"/>
    <property type="match status" value="1"/>
</dbReference>
<reference key="1">
    <citation type="submission" date="2006-02" db="EMBL/GenBank/DDBJ databases">
        <title>Complete sequence of chromosome of Rhodoferax ferrireducens DSM 15236.</title>
        <authorList>
            <person name="Copeland A."/>
            <person name="Lucas S."/>
            <person name="Lapidus A."/>
            <person name="Barry K."/>
            <person name="Detter J.C."/>
            <person name="Glavina del Rio T."/>
            <person name="Hammon N."/>
            <person name="Israni S."/>
            <person name="Pitluck S."/>
            <person name="Brettin T."/>
            <person name="Bruce D."/>
            <person name="Han C."/>
            <person name="Tapia R."/>
            <person name="Gilna P."/>
            <person name="Kiss H."/>
            <person name="Schmutz J."/>
            <person name="Larimer F."/>
            <person name="Land M."/>
            <person name="Kyrpides N."/>
            <person name="Ivanova N."/>
            <person name="Richardson P."/>
        </authorList>
    </citation>
    <scope>NUCLEOTIDE SEQUENCE [LARGE SCALE GENOMIC DNA]</scope>
    <source>
        <strain>ATCC BAA-621 / DSM 15236 / T118</strain>
    </source>
</reference>
<protein>
    <recommendedName>
        <fullName evidence="1">Recombination protein RecR</fullName>
    </recommendedName>
</protein>
<name>RECR_ALBFT</name>
<sequence length="196" mass="21186">MADLNSLDVLIQALRRLPGVGVKSASRMAFHLLQHDRPGALALSRALQVAADQMRHCERCHTFTQADICATCLDPRRDASKLCVVETPADQSALERTGAYHGLYFVLMGKLSPLDGIGPKDIGLKGLFDRACDGTVQEVILATNFTAEGEATAHVISEGLKSRGLRLTRLARGVPVGSELEYVDLGTIAHALLDRR</sequence>